<organism>
    <name type="scientific">Borreliella burgdorferi (strain ZS7)</name>
    <name type="common">Borrelia burgdorferi</name>
    <dbReference type="NCBI Taxonomy" id="445985"/>
    <lineage>
        <taxon>Bacteria</taxon>
        <taxon>Pseudomonadati</taxon>
        <taxon>Spirochaetota</taxon>
        <taxon>Spirochaetia</taxon>
        <taxon>Spirochaetales</taxon>
        <taxon>Borreliaceae</taxon>
        <taxon>Borreliella</taxon>
    </lineage>
</organism>
<dbReference type="EMBL" id="CP001205">
    <property type="protein sequence ID" value="ACK74514.1"/>
    <property type="molecule type" value="Genomic_DNA"/>
</dbReference>
<dbReference type="RefSeq" id="WP_002656307.1">
    <property type="nucleotide sequence ID" value="NC_011728.1"/>
</dbReference>
<dbReference type="SMR" id="B7J265"/>
<dbReference type="GeneID" id="56567935"/>
<dbReference type="KEGG" id="bbz:BbuZS7_0511"/>
<dbReference type="HOGENOM" id="CLU_103849_1_2_12"/>
<dbReference type="Proteomes" id="UP000006901">
    <property type="component" value="Chromosome"/>
</dbReference>
<dbReference type="GO" id="GO:0005829">
    <property type="term" value="C:cytosol"/>
    <property type="evidence" value="ECO:0007669"/>
    <property type="project" value="TreeGrafter"/>
</dbReference>
<dbReference type="GO" id="GO:0015935">
    <property type="term" value="C:small ribosomal subunit"/>
    <property type="evidence" value="ECO:0007669"/>
    <property type="project" value="TreeGrafter"/>
</dbReference>
<dbReference type="GO" id="GO:0019843">
    <property type="term" value="F:rRNA binding"/>
    <property type="evidence" value="ECO:0007669"/>
    <property type="project" value="UniProtKB-UniRule"/>
</dbReference>
<dbReference type="GO" id="GO:0003735">
    <property type="term" value="F:structural constituent of ribosome"/>
    <property type="evidence" value="ECO:0007669"/>
    <property type="project" value="InterPro"/>
</dbReference>
<dbReference type="GO" id="GO:0000049">
    <property type="term" value="F:tRNA binding"/>
    <property type="evidence" value="ECO:0007669"/>
    <property type="project" value="UniProtKB-UniRule"/>
</dbReference>
<dbReference type="GO" id="GO:0006412">
    <property type="term" value="P:translation"/>
    <property type="evidence" value="ECO:0007669"/>
    <property type="project" value="UniProtKB-UniRule"/>
</dbReference>
<dbReference type="FunFam" id="1.10.8.50:FF:000001">
    <property type="entry name" value="30S ribosomal protein S13"/>
    <property type="match status" value="1"/>
</dbReference>
<dbReference type="FunFam" id="4.10.910.10:FF:000001">
    <property type="entry name" value="30S ribosomal protein S13"/>
    <property type="match status" value="1"/>
</dbReference>
<dbReference type="Gene3D" id="1.10.8.50">
    <property type="match status" value="1"/>
</dbReference>
<dbReference type="Gene3D" id="4.10.910.10">
    <property type="entry name" value="30s ribosomal protein s13, domain 2"/>
    <property type="match status" value="1"/>
</dbReference>
<dbReference type="HAMAP" id="MF_01315">
    <property type="entry name" value="Ribosomal_uS13"/>
    <property type="match status" value="1"/>
</dbReference>
<dbReference type="InterPro" id="IPR027437">
    <property type="entry name" value="Rbsml_uS13_C"/>
</dbReference>
<dbReference type="InterPro" id="IPR001892">
    <property type="entry name" value="Ribosomal_uS13"/>
</dbReference>
<dbReference type="InterPro" id="IPR010979">
    <property type="entry name" value="Ribosomal_uS13-like_H2TH"/>
</dbReference>
<dbReference type="InterPro" id="IPR019980">
    <property type="entry name" value="Ribosomal_uS13_bac-type"/>
</dbReference>
<dbReference type="InterPro" id="IPR018269">
    <property type="entry name" value="Ribosomal_uS13_CS"/>
</dbReference>
<dbReference type="NCBIfam" id="TIGR03631">
    <property type="entry name" value="uS13_bact"/>
    <property type="match status" value="1"/>
</dbReference>
<dbReference type="PANTHER" id="PTHR10871">
    <property type="entry name" value="30S RIBOSOMAL PROTEIN S13/40S RIBOSOMAL PROTEIN S18"/>
    <property type="match status" value="1"/>
</dbReference>
<dbReference type="PANTHER" id="PTHR10871:SF1">
    <property type="entry name" value="SMALL RIBOSOMAL SUBUNIT PROTEIN US13M"/>
    <property type="match status" value="1"/>
</dbReference>
<dbReference type="Pfam" id="PF00416">
    <property type="entry name" value="Ribosomal_S13"/>
    <property type="match status" value="1"/>
</dbReference>
<dbReference type="PIRSF" id="PIRSF002134">
    <property type="entry name" value="Ribosomal_S13"/>
    <property type="match status" value="1"/>
</dbReference>
<dbReference type="SUPFAM" id="SSF46946">
    <property type="entry name" value="S13-like H2TH domain"/>
    <property type="match status" value="1"/>
</dbReference>
<dbReference type="PROSITE" id="PS00646">
    <property type="entry name" value="RIBOSOMAL_S13_1"/>
    <property type="match status" value="1"/>
</dbReference>
<dbReference type="PROSITE" id="PS50159">
    <property type="entry name" value="RIBOSOMAL_S13_2"/>
    <property type="match status" value="1"/>
</dbReference>
<comment type="function">
    <text evidence="1">Located at the top of the head of the 30S subunit, it contacts several helices of the 16S rRNA. In the 70S ribosome it contacts the 23S rRNA (bridge B1a) and protein L5 of the 50S subunit (bridge B1b), connecting the 2 subunits; these bridges are implicated in subunit movement. Contacts the tRNAs in the A and P-sites.</text>
</comment>
<comment type="subunit">
    <text evidence="1">Part of the 30S ribosomal subunit. Forms a loose heterodimer with protein S19. Forms two bridges to the 50S subunit in the 70S ribosome.</text>
</comment>
<comment type="similarity">
    <text evidence="1">Belongs to the universal ribosomal protein uS13 family.</text>
</comment>
<keyword id="KW-0687">Ribonucleoprotein</keyword>
<keyword id="KW-0689">Ribosomal protein</keyword>
<keyword id="KW-0694">RNA-binding</keyword>
<keyword id="KW-0699">rRNA-binding</keyword>
<keyword id="KW-0820">tRNA-binding</keyword>
<evidence type="ECO:0000255" key="1">
    <source>
        <dbReference type="HAMAP-Rule" id="MF_01315"/>
    </source>
</evidence>
<evidence type="ECO:0000256" key="2">
    <source>
        <dbReference type="SAM" id="MobiDB-lite"/>
    </source>
</evidence>
<evidence type="ECO:0000305" key="3"/>
<proteinExistence type="inferred from homology"/>
<accession>B7J265</accession>
<feature type="chain" id="PRO_1000141223" description="Small ribosomal subunit protein uS13">
    <location>
        <begin position="1"/>
        <end position="125"/>
    </location>
</feature>
<feature type="region of interest" description="Disordered" evidence="2">
    <location>
        <begin position="95"/>
        <end position="125"/>
    </location>
</feature>
<name>RS13_BORBZ</name>
<protein>
    <recommendedName>
        <fullName evidence="1">Small ribosomal subunit protein uS13</fullName>
    </recommendedName>
    <alternativeName>
        <fullName evidence="3">30S ribosomal protein S13</fullName>
    </alternativeName>
</protein>
<reference key="1">
    <citation type="journal article" date="2011" name="J. Bacteriol.">
        <title>Whole-genome sequences of thirteen isolates of Borrelia burgdorferi.</title>
        <authorList>
            <person name="Schutzer S.E."/>
            <person name="Fraser-Liggett C.M."/>
            <person name="Casjens S.R."/>
            <person name="Qiu W.G."/>
            <person name="Dunn J.J."/>
            <person name="Mongodin E.F."/>
            <person name="Luft B.J."/>
        </authorList>
    </citation>
    <scope>NUCLEOTIDE SEQUENCE [LARGE SCALE GENOMIC DNA]</scope>
    <source>
        <strain>ZS7</strain>
    </source>
</reference>
<gene>
    <name evidence="1" type="primary">rpsM</name>
    <name type="ordered locus">BbuZS7_0511</name>
</gene>
<sequence>MARISGIDLPNNKQLKIALTSIYGIGRTRALEVCNKSSISPSKIAKDLDNDEVNRLRKVIESDYIVEGKLRSEVAMSIKRLMDIACYRGVRHRKGLPLRGQRTKTNARTRKGKRKTVANKKIASK</sequence>